<protein>
    <recommendedName>
        <fullName evidence="12">NACHT, LRR and PYD domains-containing protein 4</fullName>
    </recommendedName>
    <alternativeName>
        <fullName>Cancer/testis antigen 58</fullName>
        <shortName>CT58</shortName>
    </alternativeName>
    <alternativeName>
        <fullName>PAAD and NACHT-containing protein 2</fullName>
        <shortName>PAN2</shortName>
    </alternativeName>
    <alternativeName>
        <fullName>PYRIN and NACHT-containing protein 2</fullName>
    </alternativeName>
    <alternativeName>
        <fullName>PYRIN-containing APAF1-like protein 4</fullName>
        <shortName>PYPAF4</shortName>
    </alternativeName>
    <alternativeName>
        <fullName>Ribonuclease inhibitor 2</fullName>
    </alternativeName>
</protein>
<evidence type="ECO:0000255" key="1">
    <source>
        <dbReference type="PROSITE-ProRule" id="PRU00061"/>
    </source>
</evidence>
<evidence type="ECO:0000255" key="2">
    <source>
        <dbReference type="PROSITE-ProRule" id="PRU00136"/>
    </source>
</evidence>
<evidence type="ECO:0000269" key="3">
    <source>
    </source>
</evidence>
<evidence type="ECO:0000269" key="4">
    <source>
    </source>
</evidence>
<evidence type="ECO:0000269" key="5">
    <source>
    </source>
</evidence>
<evidence type="ECO:0000269" key="6">
    <source>
    </source>
</evidence>
<evidence type="ECO:0000269" key="7">
    <source>
    </source>
</evidence>
<evidence type="ECO:0000269" key="8">
    <source>
    </source>
</evidence>
<evidence type="ECO:0000269" key="9">
    <source ref="4"/>
</evidence>
<evidence type="ECO:0000303" key="10">
    <source>
    </source>
</evidence>
<evidence type="ECO:0000303" key="11">
    <source>
    </source>
</evidence>
<evidence type="ECO:0000305" key="12"/>
<evidence type="ECO:0000312" key="13">
    <source>
        <dbReference type="HGNC" id="HGNC:22943"/>
    </source>
</evidence>
<evidence type="ECO:0007829" key="14">
    <source>
        <dbReference type="PDB" id="4EWI"/>
    </source>
</evidence>
<reference key="1">
    <citation type="journal article" date="2003" name="Nat. Rev. Mol. Cell Biol.">
        <title>NALPs: a novel protein family involved in inflammation.</title>
        <authorList>
            <person name="Tschopp J."/>
            <person name="Martinon F."/>
            <person name="Burns K."/>
        </authorList>
    </citation>
    <scope>NUCLEOTIDE SEQUENCE [MRNA] (ISOFORM 1)</scope>
    <scope>VARIANT THR-144</scope>
</reference>
<reference key="2">
    <citation type="journal article" date="2002" name="J. Biol. Chem.">
        <title>A novel PAAD-containing protein that modulates NF-kappa B induction by cytokines tumor necrosis factor-alpha and interleukin-1beta.</title>
        <authorList>
            <person name="Fiorentino L."/>
            <person name="Stehlik C."/>
            <person name="Oliveira V."/>
            <person name="Ariza M.E."/>
            <person name="Godzik A."/>
            <person name="Reed J.C."/>
        </authorList>
    </citation>
    <scope>NUCLEOTIDE SEQUENCE [MRNA] (ISOFORM 1)</scope>
    <scope>FUNCTION</scope>
    <scope>INTERACTION WITH CHUK/IKKA</scope>
    <scope>VARIANT THR-144</scope>
</reference>
<reference key="3">
    <citation type="journal article" date="2002" name="FEBS Lett.">
        <title>Functional screening of five PYPAF family members identifies PYPAF5 as a novel regulator of NF-kappaB and caspase-1.</title>
        <authorList>
            <person name="Grenier J.M."/>
            <person name="Wang L."/>
            <person name="Manji G.A."/>
            <person name="Huang W.-J."/>
            <person name="Al-Garawi A."/>
            <person name="Kelly R."/>
            <person name="Carlson A."/>
            <person name="Merriam S."/>
            <person name="Lora J.M."/>
            <person name="Briskin M."/>
            <person name="DiStefano P.S."/>
            <person name="Bertin J."/>
        </authorList>
    </citation>
    <scope>NUCLEOTIDE SEQUENCE [MRNA] (ISOFORM 1)</scope>
    <scope>LACK OF INTERACTION WITH ASC</scope>
    <scope>VARIANT THR-144</scope>
</reference>
<reference key="4">
    <citation type="submission" date="2002-02" db="EMBL/GenBank/DDBJ databases">
        <authorList>
            <person name="Miyamoto T."/>
        </authorList>
    </citation>
    <scope>NUCLEOTIDE SEQUENCE [MRNA] (ISOFORM 1)</scope>
    <scope>VARIANT THR-144</scope>
</reference>
<reference key="5">
    <citation type="journal article" date="2004" name="Nat. Genet.">
        <title>Complete sequencing and characterization of 21,243 full-length human cDNAs.</title>
        <authorList>
            <person name="Ota T."/>
            <person name="Suzuki Y."/>
            <person name="Nishikawa T."/>
            <person name="Otsuki T."/>
            <person name="Sugiyama T."/>
            <person name="Irie R."/>
            <person name="Wakamatsu A."/>
            <person name="Hayashi K."/>
            <person name="Sato H."/>
            <person name="Nagai K."/>
            <person name="Kimura K."/>
            <person name="Makita H."/>
            <person name="Sekine M."/>
            <person name="Obayashi M."/>
            <person name="Nishi T."/>
            <person name="Shibahara T."/>
            <person name="Tanaka T."/>
            <person name="Ishii S."/>
            <person name="Yamamoto J."/>
            <person name="Saito K."/>
            <person name="Kawai Y."/>
            <person name="Isono Y."/>
            <person name="Nakamura Y."/>
            <person name="Nagahari K."/>
            <person name="Murakami K."/>
            <person name="Yasuda T."/>
            <person name="Iwayanagi T."/>
            <person name="Wagatsuma M."/>
            <person name="Shiratori A."/>
            <person name="Sudo H."/>
            <person name="Hosoiri T."/>
            <person name="Kaku Y."/>
            <person name="Kodaira H."/>
            <person name="Kondo H."/>
            <person name="Sugawara M."/>
            <person name="Takahashi M."/>
            <person name="Kanda K."/>
            <person name="Yokoi T."/>
            <person name="Furuya T."/>
            <person name="Kikkawa E."/>
            <person name="Omura Y."/>
            <person name="Abe K."/>
            <person name="Kamihara K."/>
            <person name="Katsuta N."/>
            <person name="Sato K."/>
            <person name="Tanikawa M."/>
            <person name="Yamazaki M."/>
            <person name="Ninomiya K."/>
            <person name="Ishibashi T."/>
            <person name="Yamashita H."/>
            <person name="Murakawa K."/>
            <person name="Fujimori K."/>
            <person name="Tanai H."/>
            <person name="Kimata M."/>
            <person name="Watanabe M."/>
            <person name="Hiraoka S."/>
            <person name="Chiba Y."/>
            <person name="Ishida S."/>
            <person name="Ono Y."/>
            <person name="Takiguchi S."/>
            <person name="Watanabe S."/>
            <person name="Yosida M."/>
            <person name="Hotuta T."/>
            <person name="Kusano J."/>
            <person name="Kanehori K."/>
            <person name="Takahashi-Fujii A."/>
            <person name="Hara H."/>
            <person name="Tanase T.-O."/>
            <person name="Nomura Y."/>
            <person name="Togiya S."/>
            <person name="Komai F."/>
            <person name="Hara R."/>
            <person name="Takeuchi K."/>
            <person name="Arita M."/>
            <person name="Imose N."/>
            <person name="Musashino K."/>
            <person name="Yuuki H."/>
            <person name="Oshima A."/>
            <person name="Sasaki N."/>
            <person name="Aotsuka S."/>
            <person name="Yoshikawa Y."/>
            <person name="Matsunawa H."/>
            <person name="Ichihara T."/>
            <person name="Shiohata N."/>
            <person name="Sano S."/>
            <person name="Moriya S."/>
            <person name="Momiyama H."/>
            <person name="Satoh N."/>
            <person name="Takami S."/>
            <person name="Terashima Y."/>
            <person name="Suzuki O."/>
            <person name="Nakagawa S."/>
            <person name="Senoh A."/>
            <person name="Mizoguchi H."/>
            <person name="Goto Y."/>
            <person name="Shimizu F."/>
            <person name="Wakebe H."/>
            <person name="Hishigaki H."/>
            <person name="Watanabe T."/>
            <person name="Sugiyama A."/>
            <person name="Takemoto M."/>
            <person name="Kawakami B."/>
            <person name="Yamazaki M."/>
            <person name="Watanabe K."/>
            <person name="Kumagai A."/>
            <person name="Itakura S."/>
            <person name="Fukuzumi Y."/>
            <person name="Fujimori Y."/>
            <person name="Komiyama M."/>
            <person name="Tashiro H."/>
            <person name="Tanigami A."/>
            <person name="Fujiwara T."/>
            <person name="Ono T."/>
            <person name="Yamada K."/>
            <person name="Fujii Y."/>
            <person name="Ozaki K."/>
            <person name="Hirao M."/>
            <person name="Ohmori Y."/>
            <person name="Kawabata A."/>
            <person name="Hikiji T."/>
            <person name="Kobatake N."/>
            <person name="Inagaki H."/>
            <person name="Ikema Y."/>
            <person name="Okamoto S."/>
            <person name="Okitani R."/>
            <person name="Kawakami T."/>
            <person name="Noguchi S."/>
            <person name="Itoh T."/>
            <person name="Shigeta K."/>
            <person name="Senba T."/>
            <person name="Matsumura K."/>
            <person name="Nakajima Y."/>
            <person name="Mizuno T."/>
            <person name="Morinaga M."/>
            <person name="Sasaki M."/>
            <person name="Togashi T."/>
            <person name="Oyama M."/>
            <person name="Hata H."/>
            <person name="Watanabe M."/>
            <person name="Komatsu T."/>
            <person name="Mizushima-Sugano J."/>
            <person name="Satoh T."/>
            <person name="Shirai Y."/>
            <person name="Takahashi Y."/>
            <person name="Nakagawa K."/>
            <person name="Okumura K."/>
            <person name="Nagase T."/>
            <person name="Nomura N."/>
            <person name="Kikuchi H."/>
            <person name="Masuho Y."/>
            <person name="Yamashita R."/>
            <person name="Nakai K."/>
            <person name="Yada T."/>
            <person name="Nakamura Y."/>
            <person name="Ohara O."/>
            <person name="Isogai T."/>
            <person name="Sugano S."/>
        </authorList>
    </citation>
    <scope>NUCLEOTIDE SEQUENCE [LARGE SCALE MRNA] (ISOFORM 3)</scope>
    <scope>VARIANT THR-144</scope>
</reference>
<reference key="6">
    <citation type="journal article" date="2004" name="Genome Res.">
        <title>The status, quality, and expansion of the NIH full-length cDNA project: the Mammalian Gene Collection (MGC).</title>
        <authorList>
            <consortium name="The MGC Project Team"/>
        </authorList>
    </citation>
    <scope>NUCLEOTIDE SEQUENCE [LARGE SCALE MRNA] (ISOFORM 1)</scope>
    <scope>NUCLEOTIDE SEQUENCE [LARGE SCALE MRNA] OF 436-994 (ISOFORM 2)</scope>
    <scope>VARIANTS ASP-383; GLN-390; MET-774 AND LEU-925</scope>
    <source>
        <tissue>Placenta</tissue>
        <tissue>Testis</tissue>
    </source>
</reference>
<reference key="7">
    <citation type="journal article" date="2012" name="Nat. Immunol.">
        <title>NLRP4 negatively regulates type I interferon signaling by targeting the kinase TBK1 for degradation via the ubiquitin ligase DTX4.</title>
        <authorList>
            <person name="Cui J."/>
            <person name="Li Y."/>
            <person name="Zhu L."/>
            <person name="Liu D."/>
            <person name="Songyang Z."/>
            <person name="Wang H.Y."/>
            <person name="Wang R.F."/>
        </authorList>
    </citation>
    <scope>FUNCTION IN INTERFERON PATHWAY</scope>
</reference>
<reference key="8">
    <citation type="journal article" date="2012" name="Biochemistry">
        <title>Structural and functional analysis of the NLRP4 pyrin domain.</title>
        <authorList>
            <person name="Eibl C."/>
            <person name="Grigoriu S."/>
            <person name="Hessenberger M."/>
            <person name="Wenger J."/>
            <person name="Puehringer S."/>
            <person name="Pinheiro A.S."/>
            <person name="Wagner R.N."/>
            <person name="Proell M."/>
            <person name="Reed J.C."/>
            <person name="Page R."/>
            <person name="Diederichs K."/>
            <person name="Peti W."/>
        </authorList>
    </citation>
    <scope>X-RAY CRYSTALLOGRAPHY (2.28 ANGSTROMS) OF 1-110</scope>
    <scope>PYRIN DOMAIN</scope>
</reference>
<proteinExistence type="evidence at protein level"/>
<dbReference type="EMBL" id="AF442488">
    <property type="protein sequence ID" value="AAL35293.1"/>
    <property type="molecule type" value="mRNA"/>
</dbReference>
<dbReference type="EMBL" id="AY072792">
    <property type="protein sequence ID" value="AAL68396.1"/>
    <property type="molecule type" value="mRNA"/>
</dbReference>
<dbReference type="EMBL" id="AF479747">
    <property type="protein sequence ID" value="AAL87104.1"/>
    <property type="molecule type" value="mRNA"/>
</dbReference>
<dbReference type="EMBL" id="AF482706">
    <property type="protein sequence ID" value="AAL88672.1"/>
    <property type="status" value="ALT_SEQ"/>
    <property type="molecule type" value="mRNA"/>
</dbReference>
<dbReference type="EMBL" id="AK056688">
    <property type="protein sequence ID" value="BAB71254.1"/>
    <property type="molecule type" value="mRNA"/>
</dbReference>
<dbReference type="EMBL" id="BC016443">
    <property type="protein sequence ID" value="AAH16443.1"/>
    <property type="molecule type" value="mRNA"/>
</dbReference>
<dbReference type="EMBL" id="BC050326">
    <property type="protein sequence ID" value="AAH50326.1"/>
    <property type="molecule type" value="mRNA"/>
</dbReference>
<dbReference type="CCDS" id="CCDS12936.1">
    <molecule id="Q96MN2-1"/>
</dbReference>
<dbReference type="RefSeq" id="NP_604393.2">
    <molecule id="Q96MN2-1"/>
    <property type="nucleotide sequence ID" value="NM_134444.5"/>
</dbReference>
<dbReference type="PDB" id="4EWI">
    <property type="method" value="X-ray"/>
    <property type="resolution" value="2.28 A"/>
    <property type="chains" value="A/B=1-110"/>
</dbReference>
<dbReference type="PDBsum" id="4EWI"/>
<dbReference type="SMR" id="Q96MN2"/>
<dbReference type="BioGRID" id="127102">
    <property type="interactions" value="7"/>
</dbReference>
<dbReference type="DIP" id="DIP-60912N"/>
<dbReference type="FunCoup" id="Q96MN2">
    <property type="interactions" value="197"/>
</dbReference>
<dbReference type="IntAct" id="Q96MN2">
    <property type="interactions" value="3"/>
</dbReference>
<dbReference type="STRING" id="9606.ENSP00000301295"/>
<dbReference type="ChEMBL" id="CHEMBL5465345"/>
<dbReference type="GlyGen" id="Q96MN2">
    <property type="glycosylation" value="1 site"/>
</dbReference>
<dbReference type="iPTMnet" id="Q96MN2"/>
<dbReference type="PhosphoSitePlus" id="Q96MN2"/>
<dbReference type="BioMuta" id="NLRP4"/>
<dbReference type="DMDM" id="148887404"/>
<dbReference type="jPOST" id="Q96MN2"/>
<dbReference type="MassIVE" id="Q96MN2"/>
<dbReference type="PaxDb" id="9606-ENSP00000301295"/>
<dbReference type="PeptideAtlas" id="Q96MN2"/>
<dbReference type="ProteomicsDB" id="77378">
    <molecule id="Q96MN2-1"/>
</dbReference>
<dbReference type="ProteomicsDB" id="77379">
    <molecule id="Q96MN2-2"/>
</dbReference>
<dbReference type="ProteomicsDB" id="77380">
    <molecule id="Q96MN2-3"/>
</dbReference>
<dbReference type="Antibodypedia" id="33159">
    <property type="antibodies" value="146 antibodies from 25 providers"/>
</dbReference>
<dbReference type="DNASU" id="147945"/>
<dbReference type="Ensembl" id="ENST00000301295.11">
    <molecule id="Q96MN2-1"/>
    <property type="protein sequence ID" value="ENSP00000301295.4"/>
    <property type="gene ID" value="ENSG00000160505.16"/>
</dbReference>
<dbReference type="Ensembl" id="ENST00000587891.5">
    <molecule id="Q96MN2-3"/>
    <property type="protein sequence ID" value="ENSP00000465463.1"/>
    <property type="gene ID" value="ENSG00000160505.16"/>
</dbReference>
<dbReference type="GeneID" id="147945"/>
<dbReference type="KEGG" id="hsa:147945"/>
<dbReference type="MANE-Select" id="ENST00000301295.11">
    <property type="protein sequence ID" value="ENSP00000301295.4"/>
    <property type="RefSeq nucleotide sequence ID" value="NM_134444.5"/>
    <property type="RefSeq protein sequence ID" value="NP_604393.2"/>
</dbReference>
<dbReference type="UCSC" id="uc002qmd.5">
    <molecule id="Q96MN2-1"/>
    <property type="organism name" value="human"/>
</dbReference>
<dbReference type="AGR" id="HGNC:22943"/>
<dbReference type="CTD" id="147945"/>
<dbReference type="DisGeNET" id="147945"/>
<dbReference type="GeneCards" id="NLRP4"/>
<dbReference type="HGNC" id="HGNC:22943">
    <property type="gene designation" value="NLRP4"/>
</dbReference>
<dbReference type="HPA" id="ENSG00000160505">
    <property type="expression patterns" value="Tissue enhanced (lymphoid tissue, testis)"/>
</dbReference>
<dbReference type="MIM" id="609645">
    <property type="type" value="gene"/>
</dbReference>
<dbReference type="neXtProt" id="NX_Q96MN2"/>
<dbReference type="OpenTargets" id="ENSG00000160505"/>
<dbReference type="PharmGKB" id="PA162397947"/>
<dbReference type="VEuPathDB" id="HostDB:ENSG00000160505"/>
<dbReference type="eggNOG" id="KOG4308">
    <property type="taxonomic scope" value="Eukaryota"/>
</dbReference>
<dbReference type="GeneTree" id="ENSGT00940000162284"/>
<dbReference type="HOGENOM" id="CLU_002274_2_1_1"/>
<dbReference type="InParanoid" id="Q96MN2"/>
<dbReference type="OMA" id="MWLRESI"/>
<dbReference type="OrthoDB" id="120976at2759"/>
<dbReference type="PAN-GO" id="Q96MN2">
    <property type="GO annotations" value="2 GO annotations based on evolutionary models"/>
</dbReference>
<dbReference type="PhylomeDB" id="Q96MN2"/>
<dbReference type="PathwayCommons" id="Q96MN2"/>
<dbReference type="Reactome" id="R-HSA-1606341">
    <property type="pathway name" value="IRF3 mediated activation of type 1 IFN"/>
</dbReference>
<dbReference type="Reactome" id="R-HSA-3134975">
    <property type="pathway name" value="Regulation of innate immune responses to cytosolic DNA"/>
</dbReference>
<dbReference type="Reactome" id="R-HSA-3270619">
    <property type="pathway name" value="IRF3-mediated induction of type I IFN"/>
</dbReference>
<dbReference type="SignaLink" id="Q96MN2"/>
<dbReference type="BioGRID-ORCS" id="147945">
    <property type="hits" value="12 hits in 1144 CRISPR screens"/>
</dbReference>
<dbReference type="ChiTaRS" id="NLRP4">
    <property type="organism name" value="human"/>
</dbReference>
<dbReference type="EvolutionaryTrace" id="Q96MN2"/>
<dbReference type="GeneWiki" id="NLRP4"/>
<dbReference type="GenomeRNAi" id="147945"/>
<dbReference type="Pharos" id="Q96MN2">
    <property type="development level" value="Tbio"/>
</dbReference>
<dbReference type="PRO" id="PR:Q96MN2"/>
<dbReference type="Proteomes" id="UP000005640">
    <property type="component" value="Chromosome 19"/>
</dbReference>
<dbReference type="RNAct" id="Q96MN2">
    <property type="molecule type" value="protein"/>
</dbReference>
<dbReference type="Bgee" id="ENSG00000160505">
    <property type="expression patterns" value="Expressed in secondary oocyte and 36 other cell types or tissues"/>
</dbReference>
<dbReference type="ExpressionAtlas" id="Q96MN2">
    <property type="expression patterns" value="baseline and differential"/>
</dbReference>
<dbReference type="GO" id="GO:0005737">
    <property type="term" value="C:cytoplasm"/>
    <property type="evidence" value="ECO:0000314"/>
    <property type="project" value="UniProt"/>
</dbReference>
<dbReference type="GO" id="GO:0005829">
    <property type="term" value="C:cytosol"/>
    <property type="evidence" value="ECO:0000304"/>
    <property type="project" value="Reactome"/>
</dbReference>
<dbReference type="GO" id="GO:0005524">
    <property type="term" value="F:ATP binding"/>
    <property type="evidence" value="ECO:0007669"/>
    <property type="project" value="UniProtKB-KW"/>
</dbReference>
<dbReference type="GO" id="GO:0060090">
    <property type="term" value="F:molecular adaptor activity"/>
    <property type="evidence" value="ECO:0000314"/>
    <property type="project" value="UniProt"/>
</dbReference>
<dbReference type="GO" id="GO:0006954">
    <property type="term" value="P:inflammatory response"/>
    <property type="evidence" value="ECO:0007669"/>
    <property type="project" value="UniProtKB-KW"/>
</dbReference>
<dbReference type="GO" id="GO:0045824">
    <property type="term" value="P:negative regulation of innate immune response"/>
    <property type="evidence" value="ECO:0000314"/>
    <property type="project" value="UniProt"/>
</dbReference>
<dbReference type="GO" id="GO:0050727">
    <property type="term" value="P:regulation of inflammatory response"/>
    <property type="evidence" value="ECO:0000318"/>
    <property type="project" value="GO_Central"/>
</dbReference>
<dbReference type="CDD" id="cd08320">
    <property type="entry name" value="Pyrin_NALPs"/>
    <property type="match status" value="1"/>
</dbReference>
<dbReference type="FunFam" id="1.10.533.10:FF:000056">
    <property type="entry name" value="NACHT, LRR and PYD domains-containing protein 14"/>
    <property type="match status" value="1"/>
</dbReference>
<dbReference type="FunFam" id="3.40.50.300:FF:000442">
    <property type="entry name" value="NACHT, LRR and PYD domains-containing protein 3"/>
    <property type="match status" value="1"/>
</dbReference>
<dbReference type="FunFam" id="3.80.10.10:FF:000587">
    <property type="entry name" value="NLR family pyrin domain containing 4"/>
    <property type="match status" value="1"/>
</dbReference>
<dbReference type="Gene3D" id="1.10.533.10">
    <property type="entry name" value="Death Domain, Fas"/>
    <property type="match status" value="1"/>
</dbReference>
<dbReference type="Gene3D" id="3.40.50.300">
    <property type="entry name" value="P-loop containing nucleotide triphosphate hydrolases"/>
    <property type="match status" value="1"/>
</dbReference>
<dbReference type="Gene3D" id="3.80.10.10">
    <property type="entry name" value="Ribonuclease Inhibitor"/>
    <property type="match status" value="1"/>
</dbReference>
<dbReference type="InterPro" id="IPR004020">
    <property type="entry name" value="DAPIN"/>
</dbReference>
<dbReference type="InterPro" id="IPR011029">
    <property type="entry name" value="DEATH-like_dom_sf"/>
</dbReference>
<dbReference type="InterPro" id="IPR001611">
    <property type="entry name" value="Leu-rich_rpt"/>
</dbReference>
<dbReference type="InterPro" id="IPR032675">
    <property type="entry name" value="LRR_dom_sf"/>
</dbReference>
<dbReference type="InterPro" id="IPR007111">
    <property type="entry name" value="NACHT_NTPase"/>
</dbReference>
<dbReference type="InterPro" id="IPR041267">
    <property type="entry name" value="NLRP_HD2"/>
</dbReference>
<dbReference type="InterPro" id="IPR050637">
    <property type="entry name" value="NLRP_innate_immun_reg"/>
</dbReference>
<dbReference type="InterPro" id="IPR041075">
    <property type="entry name" value="NOD1/2_WH"/>
</dbReference>
<dbReference type="InterPro" id="IPR027417">
    <property type="entry name" value="P-loop_NTPase"/>
</dbReference>
<dbReference type="PANTHER" id="PTHR45690">
    <property type="entry name" value="NACHT, LRR AND PYD DOMAINS-CONTAINING PROTEIN 12"/>
    <property type="match status" value="1"/>
</dbReference>
<dbReference type="PANTHER" id="PTHR45690:SF6">
    <property type="entry name" value="NACHT, LRR AND PYD DOMAINS-CONTAINING PROTEIN 4"/>
    <property type="match status" value="1"/>
</dbReference>
<dbReference type="Pfam" id="PF13516">
    <property type="entry name" value="LRR_6"/>
    <property type="match status" value="4"/>
</dbReference>
<dbReference type="Pfam" id="PF05729">
    <property type="entry name" value="NACHT"/>
    <property type="match status" value="1"/>
</dbReference>
<dbReference type="Pfam" id="PF17776">
    <property type="entry name" value="NLRC4_HD2"/>
    <property type="match status" value="1"/>
</dbReference>
<dbReference type="Pfam" id="PF17779">
    <property type="entry name" value="NOD2_WH"/>
    <property type="match status" value="1"/>
</dbReference>
<dbReference type="Pfam" id="PF02758">
    <property type="entry name" value="PYRIN"/>
    <property type="match status" value="1"/>
</dbReference>
<dbReference type="SMART" id="SM00368">
    <property type="entry name" value="LRR_RI"/>
    <property type="match status" value="8"/>
</dbReference>
<dbReference type="SMART" id="SM01289">
    <property type="entry name" value="PYRIN"/>
    <property type="match status" value="1"/>
</dbReference>
<dbReference type="SUPFAM" id="SSF47986">
    <property type="entry name" value="DEATH domain"/>
    <property type="match status" value="1"/>
</dbReference>
<dbReference type="SUPFAM" id="SSF52540">
    <property type="entry name" value="P-loop containing nucleoside triphosphate hydrolases"/>
    <property type="match status" value="1"/>
</dbReference>
<dbReference type="SUPFAM" id="SSF52047">
    <property type="entry name" value="RNI-like"/>
    <property type="match status" value="1"/>
</dbReference>
<dbReference type="PROSITE" id="PS50824">
    <property type="entry name" value="DAPIN"/>
    <property type="match status" value="1"/>
</dbReference>
<dbReference type="PROSITE" id="PS50837">
    <property type="entry name" value="NACHT"/>
    <property type="match status" value="1"/>
</dbReference>
<sequence>MAASFFSDFGLMWYLEELKKEEFRKFKEHLKQMTLQLELKQIPWTEVKKASREELANLLIKHYEEQQAWNITLRIFQKMDRKDLCMKVMRERTGYTKTYQAHAKQKFSRLWSSKSVTEIHLYFEEEVKQEECDHLDRLFAPKEAGKQPRTVIIQGPQGIGKTTLLMKLMMAWSDNKIFRDRFLYTFYFCCRELRELPPTSLADLISREWPDPAAPITEIVSQPERLLFVIDSFEELQGGLNEPDSDLCGDLMEKRPVQVLLSSLLRKKMLPEASLLIAIKPVCPKELRDQVTISEIYQPRGFNESDRLVYFCCFFKDPKRAMEAFNLVRESEQLFSICQIPLLCWILCTSLKQEMQKGKDLALTCQSTTSVYSSFVFNLFTPEGAEGPTPQTQHQLKALCSLAAEGMWTDTFEFCEDDLRRNGVVDADIPALLGTKILLKYGERESSYVFLHVCIQEFCAALFYLLKSHLDHPHPAVRCVQELLVANFEKARRAHWIFLGCFLTGLLNKKEQEKLDAFFGFQLSQEIKQQIHQCLKSLGERGNPQGQVDSLAIFYCLFEMQDPAFVKQAVNLLQEANFHIIDNVDLVVSAYCLKYCSSLRKLCFSVQNVFKKEDEHSSTSDYSLICWHHICSVLTTSGHLRELQVQDSTLSESTFVTWCNQLRHPSCRLQKLGINNVSFSGQSVLLFEVLFYQPDLKYLSFTLTKLSRDDIRSLCDALNYPAGNVKELALVNCHLSPIDCEVLAGLLTNNKKLTYLNVSCNQLDTGVPLLCEALCSPDTVLVYLMLAFCHLSEQCCEYISEMLLRNKSVRYLDLSANVLKDEGLKTLCEALKHPDCCLDSLCLVKCFITAAGCEDLASALISNQNLKILQIGCNEIGDVGVQLLCRALTHTDCRLEILGLEECGLTSTCCKDLASVLTCSKTLQQLNLTLNTLDHTGVVVLCEALRHPECALQVLGLRKTDFDEETQALLTAEEERNPNLTITDDCDTITRVEI</sequence>
<accession>Q96MN2</accession>
<accession>Q86W87</accession>
<accession>Q96AY6</accession>
<keyword id="KW-0002">3D-structure</keyword>
<keyword id="KW-0025">Alternative splicing</keyword>
<keyword id="KW-0067">ATP-binding</keyword>
<keyword id="KW-0395">Inflammatory response</keyword>
<keyword id="KW-0433">Leucine-rich repeat</keyword>
<keyword id="KW-0547">Nucleotide-binding</keyword>
<keyword id="KW-1267">Proteomics identification</keyword>
<keyword id="KW-1185">Reference proteome</keyword>
<keyword id="KW-0677">Repeat</keyword>
<gene>
    <name evidence="13" type="primary">NLRP4</name>
    <name type="synonym">NALP4</name>
    <name type="synonym">PAN2</name>
    <name type="synonym">PYPAF4</name>
    <name type="synonym">RNH2</name>
</gene>
<comment type="function">
    <text evidence="3 8">May be involved in inflammation and recognition of cytosolic pathogen-associated molecular patterns (PAMPs) not intercepted by membrane-bound receptors. Acts as a negative regulator of the type I interferon signaling pathway by serving as an adapter to promote DTX4-mediated ubiquitination of activated TBK1, and its subsequent degradation. Suppresses NF-kappaB induction by the cytokines TNFA and IL1B, suggesting that it operates at a point of convergence in these two cytokine signaling pathways.</text>
</comment>
<comment type="subunit">
    <text evidence="3">Interacts with CHUK/IKKA, inhibiting its kinase activity.</text>
</comment>
<comment type="alternative products">
    <event type="alternative splicing"/>
    <isoform>
        <id>Q96MN2-1</id>
        <name>1</name>
        <sequence type="displayed"/>
    </isoform>
    <isoform>
        <id>Q96MN2-2</id>
        <name>2</name>
        <sequence type="described" ref="VSP_003916 VSP_044007"/>
    </isoform>
    <isoform>
        <id>Q96MN2-3</id>
        <name>3</name>
        <sequence type="described" ref="VSP_003916"/>
    </isoform>
    <text>Experimental confirmation may be lacking for some isoforms.</text>
</comment>
<comment type="domain">
    <text>The pyrin domain is sufficient for suppression of NF-kappaB activity, it adopts a typical death domain fold, but in contrast to several NLRP family pyrin domains it doesn't bind homotypically to the ASC adapter, which supports the observation that NLRP4 has no effect on IL1B activation.</text>
</comment>
<comment type="similarity">
    <text evidence="12">Belongs to the NLRP family.</text>
</comment>
<comment type="sequence caution" evidence="12">
    <conflict type="erroneous termination">
        <sequence resource="EMBL-CDS" id="AAL88672"/>
    </conflict>
    <text>Truncated C-terminus.</text>
</comment>
<feature type="chain" id="PRO_0000080889" description="NACHT, LRR and PYD domains-containing protein 4">
    <location>
        <begin position="1"/>
        <end position="994"/>
    </location>
</feature>
<feature type="domain" description="Pyrin" evidence="1">
    <location>
        <begin position="1"/>
        <end position="94"/>
    </location>
</feature>
<feature type="domain" description="NACHT" evidence="2">
    <location>
        <begin position="149"/>
        <end position="472"/>
    </location>
</feature>
<feature type="repeat" description="LRR 1">
    <location>
        <begin position="637"/>
        <end position="660"/>
    </location>
</feature>
<feature type="repeat" description="LRR 2">
    <location>
        <begin position="698"/>
        <end position="721"/>
    </location>
</feature>
<feature type="repeat" description="LRR 3">
    <location>
        <begin position="722"/>
        <end position="745"/>
    </location>
</feature>
<feature type="repeat" description="LRR 4">
    <location>
        <begin position="750"/>
        <end position="777"/>
    </location>
</feature>
<feature type="repeat" description="LRR 5">
    <location>
        <begin position="806"/>
        <end position="833"/>
    </location>
</feature>
<feature type="repeat" description="LRR 6">
    <location>
        <begin position="863"/>
        <end position="886"/>
    </location>
</feature>
<feature type="repeat" description="LRR 7">
    <location>
        <begin position="920"/>
        <end position="943"/>
    </location>
</feature>
<feature type="repeat" description="LRR 8">
    <location>
        <begin position="949"/>
        <end position="972"/>
    </location>
</feature>
<feature type="binding site" evidence="2">
    <location>
        <begin position="155"/>
        <end position="162"/>
    </location>
    <ligand>
        <name>ATP</name>
        <dbReference type="ChEBI" id="CHEBI:30616"/>
    </ligand>
</feature>
<feature type="splice variant" id="VSP_003916" description="In isoform 3 and isoform 2." evidence="10">
    <original>MAASFFSDFGLMWYLEELKKEEFRKFKEHLKQMTLQLELKQIPWTEVKKASREELANLLIKHYEEQQAWNITLRIFQKMDRKDLCMKVMRERT</original>
    <variation>MQECLTLWVFSPLALTDS</variation>
    <location>
        <begin position="1"/>
        <end position="93"/>
    </location>
</feature>
<feature type="splice variant" id="VSP_044007" description="In isoform 2." evidence="11">
    <location>
        <begin position="731"/>
        <end position="786"/>
    </location>
</feature>
<feature type="sequence variant" id="VAR_024179" description="In dbSNP:rs441827." evidence="3 4 5 6 9">
    <original>A</original>
    <variation>T</variation>
    <location>
        <position position="144"/>
    </location>
</feature>
<feature type="sequence variant" id="VAR_024827" description="In dbSNP:rs17857373." evidence="7">
    <original>E</original>
    <variation>D</variation>
    <location>
        <position position="383"/>
    </location>
</feature>
<feature type="sequence variant" id="VAR_024828" description="In dbSNP:rs17857374." evidence="7">
    <original>P</original>
    <variation>Q</variation>
    <location>
        <position position="390"/>
    </location>
</feature>
<feature type="sequence variant" id="VAR_032764" description="In dbSNP:rs12462372.">
    <original>R</original>
    <variation>H</variation>
    <location>
        <position position="708"/>
    </location>
</feature>
<feature type="sequence variant" id="VAR_024829" description="In dbSNP:rs17854614." evidence="7">
    <original>L</original>
    <variation>M</variation>
    <location>
        <position position="774"/>
    </location>
</feature>
<feature type="sequence variant" id="VAR_020007" description="In dbSNP:rs302453." evidence="7">
    <original>Q</original>
    <variation>L</variation>
    <location>
        <position position="925"/>
    </location>
</feature>
<feature type="sequence conflict" description="In Ref. 4; AAL88672." evidence="12" ref="4">
    <original>L</original>
    <variation>P</variation>
    <location>
        <position position="55"/>
    </location>
</feature>
<feature type="sequence conflict" description="In Ref. 4; AAL88672." evidence="12" ref="4">
    <original>Y</original>
    <variation>H</variation>
    <location>
        <position position="99"/>
    </location>
</feature>
<feature type="sequence conflict" description="In Ref. 4; AAL88672." evidence="12" ref="4">
    <original>I</original>
    <variation>T</variation>
    <location>
        <position position="177"/>
    </location>
</feature>
<feature type="sequence conflict" description="In Ref. 4; AAL88672." evidence="12" ref="4">
    <original>W</original>
    <variation>R</variation>
    <location>
        <position position="209"/>
    </location>
</feature>
<feature type="sequence conflict" description="In Ref. 4; AAL88672." evidence="12" ref="4">
    <original>I</original>
    <variation>V</variation>
    <location>
        <position position="296"/>
    </location>
</feature>
<feature type="sequence conflict" description="In Ref. 4; AAL88672." evidence="12" ref="4">
    <original>Y</original>
    <variation>C</variation>
    <location>
        <position position="720"/>
    </location>
</feature>
<feature type="sequence conflict" description="In Ref. 4; AAL88672." evidence="12" ref="4">
    <original>L</original>
    <variation>P</variation>
    <location>
        <position position="957"/>
    </location>
</feature>
<feature type="helix" evidence="14">
    <location>
        <begin position="10"/>
        <end position="15"/>
    </location>
</feature>
<feature type="helix" evidence="14">
    <location>
        <begin position="20"/>
        <end position="36"/>
    </location>
</feature>
<feature type="helix" evidence="14">
    <location>
        <begin position="44"/>
        <end position="49"/>
    </location>
</feature>
<feature type="helix" evidence="14">
    <location>
        <begin position="52"/>
        <end position="78"/>
    </location>
</feature>
<feature type="helix" evidence="14">
    <location>
        <begin position="82"/>
        <end position="93"/>
    </location>
</feature>
<organism>
    <name type="scientific">Homo sapiens</name>
    <name type="common">Human</name>
    <dbReference type="NCBI Taxonomy" id="9606"/>
    <lineage>
        <taxon>Eukaryota</taxon>
        <taxon>Metazoa</taxon>
        <taxon>Chordata</taxon>
        <taxon>Craniata</taxon>
        <taxon>Vertebrata</taxon>
        <taxon>Euteleostomi</taxon>
        <taxon>Mammalia</taxon>
        <taxon>Eutheria</taxon>
        <taxon>Euarchontoglires</taxon>
        <taxon>Primates</taxon>
        <taxon>Haplorrhini</taxon>
        <taxon>Catarrhini</taxon>
        <taxon>Hominidae</taxon>
        <taxon>Homo</taxon>
    </lineage>
</organism>
<name>NALP4_HUMAN</name>